<keyword id="KW-0125">Carotenoid biosynthesis</keyword>
<keyword id="KW-0150">Chloroplast</keyword>
<keyword id="KW-0414">Isoprene biosynthesis</keyword>
<keyword id="KW-0934">Plastid</keyword>
<keyword id="KW-1185">Reference proteome</keyword>
<keyword id="KW-0808">Transferase</keyword>
<keyword id="KW-0809">Transit peptide</keyword>
<evidence type="ECO:0000255" key="1"/>
<evidence type="ECO:0000256" key="2">
    <source>
        <dbReference type="SAM" id="MobiDB-lite"/>
    </source>
</evidence>
<evidence type="ECO:0000269" key="3">
    <source>
    </source>
</evidence>
<evidence type="ECO:0000269" key="4">
    <source>
    </source>
</evidence>
<evidence type="ECO:0000303" key="5">
    <source>
    </source>
</evidence>
<evidence type="ECO:0000305" key="6"/>
<evidence type="ECO:0000312" key="7">
    <source>
        <dbReference type="EMBL" id="AQK99438.1"/>
    </source>
</evidence>
<name>PSY2_MAIZE</name>
<gene>
    <name evidence="5" type="primary">PSY2</name>
    <name evidence="7" type="ORF">ZEAMMB73_Zm00001d012394</name>
</gene>
<sequence length="402" mass="45074">MAAGSSAVWAAQHPACSGGKFHHLSPSHSHCRPRRALQTPPALPARRSGASPPRASLAAAAPAVAVRTASEEAVYEVVLRQAALVEAATPQRRRTRQPRWAEEEEEERVLGWGLLGDAYDRCGEVCAEYAKTFYLGTQLMTPERRKAVWAIYVWCRRTDELVDGPNASYITPTALDRWEKRLEDLFEGRPYDMYDAALSDTVSKFPVDIQPFKDMVQGMRLDLWKSRYMTFDELYLYCYYVAGTVGLMTVPVMGIAPDSKASTESVYNAALALGIANQLTNILRDVGEDARRGRIYLPLDELAQAGLTEEDIFRGKVTGKWRRFMKGQIQRARLFFDEAEKGVTHLDSASRWPVLASLWLYRQILDAIEANDYNNFTKRAYVGKAKKLLSLPLAYARAAVAP</sequence>
<feature type="transit peptide" description="Chloroplast" evidence="1">
    <location>
        <begin position="1"/>
        <end position="54"/>
    </location>
</feature>
<feature type="chain" id="PRO_0000444950" description="Phytoene synthase 2, chloroplastic">
    <location>
        <begin position="55"/>
        <end position="402"/>
    </location>
</feature>
<feature type="region of interest" description="Disordered" evidence="2">
    <location>
        <begin position="20"/>
        <end position="54"/>
    </location>
</feature>
<feature type="compositionally biased region" description="Basic residues" evidence="2">
    <location>
        <begin position="20"/>
        <end position="35"/>
    </location>
</feature>
<feature type="compositionally biased region" description="Low complexity" evidence="2">
    <location>
        <begin position="44"/>
        <end position="54"/>
    </location>
</feature>
<feature type="sequence conflict" description="In Ref. 1; AAS02284." evidence="6" ref="1">
    <original>A</original>
    <variation>V</variation>
    <location>
        <position position="36"/>
    </location>
</feature>
<feature type="sequence conflict" description="In Ref. 1; AAS02284." evidence="6" ref="1">
    <original>P</original>
    <variation>PAV</variation>
    <location>
        <position position="62"/>
    </location>
</feature>
<organism>
    <name type="scientific">Zea mays</name>
    <name type="common">Maize</name>
    <dbReference type="NCBI Taxonomy" id="4577"/>
    <lineage>
        <taxon>Eukaryota</taxon>
        <taxon>Viridiplantae</taxon>
        <taxon>Streptophyta</taxon>
        <taxon>Embryophyta</taxon>
        <taxon>Tracheophyta</taxon>
        <taxon>Spermatophyta</taxon>
        <taxon>Magnoliopsida</taxon>
        <taxon>Liliopsida</taxon>
        <taxon>Poales</taxon>
        <taxon>Poaceae</taxon>
        <taxon>PACMAD clade</taxon>
        <taxon>Panicoideae</taxon>
        <taxon>Andropogonodae</taxon>
        <taxon>Andropogoneae</taxon>
        <taxon>Tripsacinae</taxon>
        <taxon>Zea</taxon>
    </lineage>
</organism>
<protein>
    <recommendedName>
        <fullName evidence="5">Phytoene synthase 2, chloroplastic</fullName>
        <shortName evidence="6">ZmPSY2</shortName>
        <ecNumber evidence="3">2.5.1.32</ecNumber>
    </recommendedName>
</protein>
<accession>Q6EI12</accession>
<accession>Q6ED37</accession>
<proteinExistence type="evidence at protein level"/>
<comment type="function">
    <text evidence="3">Catalyzes the conversion of geranylgeranyl diphosphate to phytoene. Mediates the first committed step in carotenoid biosynthesis.</text>
</comment>
<comment type="catalytic activity">
    <reaction evidence="3">
        <text>2 (2E,6E,10E)-geranylgeranyl diphosphate = 15-cis-phytoene + 2 diphosphate</text>
        <dbReference type="Rhea" id="RHEA:34475"/>
        <dbReference type="ChEBI" id="CHEBI:27787"/>
        <dbReference type="ChEBI" id="CHEBI:33019"/>
        <dbReference type="ChEBI" id="CHEBI:58756"/>
        <dbReference type="EC" id="2.5.1.32"/>
    </reaction>
</comment>
<comment type="subcellular location">
    <subcellularLocation>
        <location evidence="4">Plastid</location>
        <location evidence="4">Chloroplast</location>
        <location evidence="4">Plastoglobule</location>
    </subcellularLocation>
</comment>
<comment type="tissue specificity">
    <text evidence="3">Expressed in leaves and endosperm.</text>
</comment>
<comment type="similarity">
    <text evidence="6">Belongs to the phytoene/squalene synthase family.</text>
</comment>
<reference key="1">
    <citation type="journal article" date="2004" name="Plant Physiol.">
        <title>Gene duplication in the carotenoid biosynthetic pathway preceded evolution of the grasses.</title>
        <authorList>
            <person name="Gallagher C.E."/>
            <person name="Matthews P.D."/>
            <person name="Li F."/>
            <person name="Wurtzel E.T."/>
        </authorList>
    </citation>
    <scope>NUCLEOTIDE SEQUENCE [GENOMIC DNA / MRNA]</scope>
    <scope>FUNCTION</scope>
    <scope>CATALYTIC ACTIVITY</scope>
    <scope>TISSUE SPECIFICITY</scope>
</reference>
<reference key="2">
    <citation type="submission" date="2004-10" db="EMBL/GenBank/DDBJ databases">
        <title>Zea mays phytoene synthase 2 (PSY2) mRNA, complete cds.</title>
        <authorList>
            <person name="Zhu C."/>
            <person name="Wurtzel E.T."/>
        </authorList>
    </citation>
    <scope>NUCLEOTIDE SEQUENCE [MRNA]</scope>
    <source>
        <tissue>Leaf</tissue>
    </source>
</reference>
<reference key="3">
    <citation type="journal article" date="2009" name="Science">
        <title>The B73 maize genome: complexity, diversity, and dynamics.</title>
        <authorList>
            <person name="Schnable P.S."/>
            <person name="Ware D."/>
            <person name="Fulton R.S."/>
            <person name="Stein J.C."/>
            <person name="Wei F."/>
            <person name="Pasternak S."/>
            <person name="Liang C."/>
            <person name="Zhang J."/>
            <person name="Fulton L."/>
            <person name="Graves T.A."/>
            <person name="Minx P."/>
            <person name="Reily A.D."/>
            <person name="Courtney L."/>
            <person name="Kruchowski S.S."/>
            <person name="Tomlinson C."/>
            <person name="Strong C."/>
            <person name="Delehaunty K."/>
            <person name="Fronick C."/>
            <person name="Courtney B."/>
            <person name="Rock S.M."/>
            <person name="Belter E."/>
            <person name="Du F."/>
            <person name="Kim K."/>
            <person name="Abbott R.M."/>
            <person name="Cotton M."/>
            <person name="Levy A."/>
            <person name="Marchetto P."/>
            <person name="Ochoa K."/>
            <person name="Jackson S.M."/>
            <person name="Gillam B."/>
            <person name="Chen W."/>
            <person name="Yan L."/>
            <person name="Higginbotham J."/>
            <person name="Cardenas M."/>
            <person name="Waligorski J."/>
            <person name="Applebaum E."/>
            <person name="Phelps L."/>
            <person name="Falcone J."/>
            <person name="Kanchi K."/>
            <person name="Thane T."/>
            <person name="Scimone A."/>
            <person name="Thane N."/>
            <person name="Henke J."/>
            <person name="Wang T."/>
            <person name="Ruppert J."/>
            <person name="Shah N."/>
            <person name="Rotter K."/>
            <person name="Hodges J."/>
            <person name="Ingenthron E."/>
            <person name="Cordes M."/>
            <person name="Kohlberg S."/>
            <person name="Sgro J."/>
            <person name="Delgado B."/>
            <person name="Mead K."/>
            <person name="Chinwalla A."/>
            <person name="Leonard S."/>
            <person name="Crouse K."/>
            <person name="Collura K."/>
            <person name="Kudrna D."/>
            <person name="Currie J."/>
            <person name="He R."/>
            <person name="Angelova A."/>
            <person name="Rajasekar S."/>
            <person name="Mueller T."/>
            <person name="Lomeli R."/>
            <person name="Scara G."/>
            <person name="Ko A."/>
            <person name="Delaney K."/>
            <person name="Wissotski M."/>
            <person name="Lopez G."/>
            <person name="Campos D."/>
            <person name="Braidotti M."/>
            <person name="Ashley E."/>
            <person name="Golser W."/>
            <person name="Kim H."/>
            <person name="Lee S."/>
            <person name="Lin J."/>
            <person name="Dujmic Z."/>
            <person name="Kim W."/>
            <person name="Talag J."/>
            <person name="Zuccolo A."/>
            <person name="Fan C."/>
            <person name="Sebastian A."/>
            <person name="Kramer M."/>
            <person name="Spiegel L."/>
            <person name="Nascimento L."/>
            <person name="Zutavern T."/>
            <person name="Miller B."/>
            <person name="Ambroise C."/>
            <person name="Muller S."/>
            <person name="Spooner W."/>
            <person name="Narechania A."/>
            <person name="Ren L."/>
            <person name="Wei S."/>
            <person name="Kumari S."/>
            <person name="Faga B."/>
            <person name="Levy M.J."/>
            <person name="McMahan L."/>
            <person name="Van Buren P."/>
            <person name="Vaughn M.W."/>
            <person name="Ying K."/>
            <person name="Yeh C.-T."/>
            <person name="Emrich S.J."/>
            <person name="Jia Y."/>
            <person name="Kalyanaraman A."/>
            <person name="Hsia A.-P."/>
            <person name="Barbazuk W.B."/>
            <person name="Baucom R.S."/>
            <person name="Brutnell T.P."/>
            <person name="Carpita N.C."/>
            <person name="Chaparro C."/>
            <person name="Chia J.-M."/>
            <person name="Deragon J.-M."/>
            <person name="Estill J.C."/>
            <person name="Fu Y."/>
            <person name="Jeddeloh J.A."/>
            <person name="Han Y."/>
            <person name="Lee H."/>
            <person name="Li P."/>
            <person name="Lisch D.R."/>
            <person name="Liu S."/>
            <person name="Liu Z."/>
            <person name="Nagel D.H."/>
            <person name="McCann M.C."/>
            <person name="SanMiguel P."/>
            <person name="Myers A.M."/>
            <person name="Nettleton D."/>
            <person name="Nguyen J."/>
            <person name="Penning B.W."/>
            <person name="Ponnala L."/>
            <person name="Schneider K.L."/>
            <person name="Schwartz D.C."/>
            <person name="Sharma A."/>
            <person name="Soderlund C."/>
            <person name="Springer N.M."/>
            <person name="Sun Q."/>
            <person name="Wang H."/>
            <person name="Waterman M."/>
            <person name="Westerman R."/>
            <person name="Wolfgruber T.K."/>
            <person name="Yang L."/>
            <person name="Yu Y."/>
            <person name="Zhang L."/>
            <person name="Zhou S."/>
            <person name="Zhu Q."/>
            <person name="Bennetzen J.L."/>
            <person name="Dawe R.K."/>
            <person name="Jiang J."/>
            <person name="Jiang N."/>
            <person name="Presting G.G."/>
            <person name="Wessler S.R."/>
            <person name="Aluru S."/>
            <person name="Martienssen R.A."/>
            <person name="Clifton S.W."/>
            <person name="McCombie W.R."/>
            <person name="Wing R.A."/>
            <person name="Wilson R.K."/>
        </authorList>
    </citation>
    <scope>NUCLEOTIDE SEQUENCE [LARGE SCALE GENOMIC DNA]</scope>
    <source>
        <strain>cv. B73</strain>
    </source>
</reference>
<reference key="4">
    <citation type="journal article" date="2009" name="PLoS Genet.">
        <title>Sequencing, mapping, and analysis of 27,455 maize full-length cDNAs.</title>
        <authorList>
            <person name="Soderlund C."/>
            <person name="Descour A."/>
            <person name="Kudrna D."/>
            <person name="Bomhoff M."/>
            <person name="Boyd L."/>
            <person name="Currie J."/>
            <person name="Angelova A."/>
            <person name="Collura K."/>
            <person name="Wissotski M."/>
            <person name="Ashley E."/>
            <person name="Morrow D."/>
            <person name="Fernandes J."/>
            <person name="Walbot V."/>
            <person name="Yu Y."/>
        </authorList>
    </citation>
    <scope>NUCLEOTIDE SEQUENCE [LARGE SCALE MRNA]</scope>
    <source>
        <strain>cv. B73</strain>
    </source>
</reference>
<reference key="5">
    <citation type="journal article" date="2012" name="Plant Cell">
        <title>Plastid localization of the key carotenoid enzyme phytoene synthase is altered by isozyme, allelic variation, and activity.</title>
        <authorList>
            <person name="Shumskaya M."/>
            <person name="Bradbury L.M."/>
            <person name="Monaco R.R."/>
            <person name="Wurtzel E.T."/>
        </authorList>
    </citation>
    <scope>SUBCELLULAR LOCATION</scope>
</reference>
<dbReference type="EC" id="2.5.1.32" evidence="3"/>
<dbReference type="EMBL" id="AY325302">
    <property type="protein sequence ID" value="AAQ91837.1"/>
    <property type="molecule type" value="Genomic_DNA"/>
</dbReference>
<dbReference type="EMBL" id="AY450646">
    <property type="protein sequence ID" value="AAS02284.1"/>
    <property type="molecule type" value="mRNA"/>
</dbReference>
<dbReference type="EMBL" id="AY773476">
    <property type="protein sequence ID" value="AAX13807.1"/>
    <property type="molecule type" value="mRNA"/>
</dbReference>
<dbReference type="EMBL" id="CM000784">
    <property type="protein sequence ID" value="AQK99438.1"/>
    <property type="molecule type" value="Genomic_DNA"/>
</dbReference>
<dbReference type="EMBL" id="BT039824">
    <property type="protein sequence ID" value="ACF84829.1"/>
    <property type="molecule type" value="mRNA"/>
</dbReference>
<dbReference type="EMBL" id="BT053947">
    <property type="protein sequence ID" value="ACL52554.1"/>
    <property type="molecule type" value="mRNA"/>
</dbReference>
<dbReference type="RefSeq" id="NP_001108117.1">
    <property type="nucleotide sequence ID" value="NM_001114645.1"/>
</dbReference>
<dbReference type="SMR" id="Q6EI12"/>
<dbReference type="FunCoup" id="Q6EI12">
    <property type="interactions" value="32"/>
</dbReference>
<dbReference type="IntAct" id="Q6EI12">
    <property type="interactions" value="1"/>
</dbReference>
<dbReference type="STRING" id="4577.Q6EI12"/>
<dbReference type="PaxDb" id="4577-GRMZM2G149317_P01"/>
<dbReference type="EnsemblPlants" id="Zm00001eb367770_T001">
    <property type="protein sequence ID" value="Zm00001eb367770_P001"/>
    <property type="gene ID" value="Zm00001eb367770"/>
</dbReference>
<dbReference type="GeneID" id="542686"/>
<dbReference type="Gramene" id="Zm00001eb367770_T001">
    <property type="protein sequence ID" value="Zm00001eb367770_P001"/>
    <property type="gene ID" value="Zm00001eb367770"/>
</dbReference>
<dbReference type="KEGG" id="zma:542686"/>
<dbReference type="eggNOG" id="KOG1459">
    <property type="taxonomic scope" value="Eukaryota"/>
</dbReference>
<dbReference type="HOGENOM" id="CLU_037269_2_0_1"/>
<dbReference type="InParanoid" id="Q6EI12"/>
<dbReference type="OMA" id="LMTPQRQ"/>
<dbReference type="OrthoDB" id="6600518at2759"/>
<dbReference type="Proteomes" id="UP000007305">
    <property type="component" value="Chromosome 8"/>
</dbReference>
<dbReference type="ExpressionAtlas" id="Q6EI12">
    <property type="expression patterns" value="baseline and differential"/>
</dbReference>
<dbReference type="GO" id="GO:0010287">
    <property type="term" value="C:plastoglobule"/>
    <property type="evidence" value="ECO:0000314"/>
    <property type="project" value="UniProtKB"/>
</dbReference>
<dbReference type="GO" id="GO:0046905">
    <property type="term" value="F:15-cis-phytoene synthase activity"/>
    <property type="evidence" value="ECO:0000314"/>
    <property type="project" value="UniProtKB"/>
</dbReference>
<dbReference type="GO" id="GO:0004311">
    <property type="term" value="F:geranylgeranyl diphosphate synthase activity"/>
    <property type="evidence" value="ECO:0007669"/>
    <property type="project" value="InterPro"/>
</dbReference>
<dbReference type="GO" id="GO:0051996">
    <property type="term" value="F:squalene synthase [NAD(P)H] activity"/>
    <property type="evidence" value="ECO:0007669"/>
    <property type="project" value="InterPro"/>
</dbReference>
<dbReference type="GO" id="GO:0016117">
    <property type="term" value="P:carotenoid biosynthetic process"/>
    <property type="evidence" value="ECO:0000314"/>
    <property type="project" value="UniProtKB"/>
</dbReference>
<dbReference type="CDD" id="cd00683">
    <property type="entry name" value="Trans_IPPS_HH"/>
    <property type="match status" value="1"/>
</dbReference>
<dbReference type="FunFam" id="1.10.600.10:FF:000004">
    <property type="entry name" value="Phytoene synthase chloroplastic"/>
    <property type="match status" value="1"/>
</dbReference>
<dbReference type="Gene3D" id="1.10.600.10">
    <property type="entry name" value="Farnesyl Diphosphate Synthase"/>
    <property type="match status" value="1"/>
</dbReference>
<dbReference type="InterPro" id="IPR008949">
    <property type="entry name" value="Isoprenoid_synthase_dom_sf"/>
</dbReference>
<dbReference type="InterPro" id="IPR002060">
    <property type="entry name" value="Squ/phyt_synthse"/>
</dbReference>
<dbReference type="InterPro" id="IPR019845">
    <property type="entry name" value="Squalene/phytoene_synthase_CS"/>
</dbReference>
<dbReference type="InterPro" id="IPR044843">
    <property type="entry name" value="Trans_IPPS_bact-type"/>
</dbReference>
<dbReference type="InterPro" id="IPR033904">
    <property type="entry name" value="Trans_IPPS_HH"/>
</dbReference>
<dbReference type="PANTHER" id="PTHR31480">
    <property type="entry name" value="BIFUNCTIONAL LYCOPENE CYCLASE/PHYTOENE SYNTHASE"/>
    <property type="match status" value="1"/>
</dbReference>
<dbReference type="Pfam" id="PF00494">
    <property type="entry name" value="SQS_PSY"/>
    <property type="match status" value="1"/>
</dbReference>
<dbReference type="SFLD" id="SFLDS00005">
    <property type="entry name" value="Isoprenoid_Synthase_Type_I"/>
    <property type="match status" value="1"/>
</dbReference>
<dbReference type="SFLD" id="SFLDG01212">
    <property type="entry name" value="Phytoene_synthase_like"/>
    <property type="match status" value="1"/>
</dbReference>
<dbReference type="SUPFAM" id="SSF48576">
    <property type="entry name" value="Terpenoid synthases"/>
    <property type="match status" value="1"/>
</dbReference>
<dbReference type="PROSITE" id="PS01045">
    <property type="entry name" value="SQUALEN_PHYTOEN_SYN_2"/>
    <property type="match status" value="1"/>
</dbReference>